<evidence type="ECO:0000255" key="1">
    <source>
        <dbReference type="HAMAP-Rule" id="MF_01041"/>
    </source>
</evidence>
<accession>Q5M4F9</accession>
<gene>
    <name type="ordered locus">stu0998</name>
</gene>
<protein>
    <recommendedName>
        <fullName evidence="1">UPF0223 protein stu0998</fullName>
    </recommendedName>
</protein>
<dbReference type="EMBL" id="CP000023">
    <property type="protein sequence ID" value="AAV60658.1"/>
    <property type="molecule type" value="Genomic_DNA"/>
</dbReference>
<dbReference type="RefSeq" id="WP_002943735.1">
    <property type="nucleotide sequence ID" value="NC_006448.1"/>
</dbReference>
<dbReference type="SMR" id="Q5M4F9"/>
<dbReference type="STRING" id="264199.stu0998"/>
<dbReference type="KEGG" id="stl:stu0998"/>
<dbReference type="PATRIC" id="fig|264199.4.peg.990"/>
<dbReference type="eggNOG" id="COG4476">
    <property type="taxonomic scope" value="Bacteria"/>
</dbReference>
<dbReference type="HOGENOM" id="CLU_166693_0_0_9"/>
<dbReference type="Proteomes" id="UP000001170">
    <property type="component" value="Chromosome"/>
</dbReference>
<dbReference type="Gene3D" id="1.10.220.80">
    <property type="entry name" value="BH2638-like"/>
    <property type="match status" value="1"/>
</dbReference>
<dbReference type="HAMAP" id="MF_01041">
    <property type="entry name" value="UPF0223"/>
    <property type="match status" value="1"/>
</dbReference>
<dbReference type="InterPro" id="IPR023324">
    <property type="entry name" value="BH2638-like_sf"/>
</dbReference>
<dbReference type="InterPro" id="IPR007920">
    <property type="entry name" value="UPF0223"/>
</dbReference>
<dbReference type="NCBIfam" id="NF003353">
    <property type="entry name" value="PRK04387.1"/>
    <property type="match status" value="1"/>
</dbReference>
<dbReference type="Pfam" id="PF05256">
    <property type="entry name" value="UPF0223"/>
    <property type="match status" value="1"/>
</dbReference>
<dbReference type="PIRSF" id="PIRSF037260">
    <property type="entry name" value="UPF0223"/>
    <property type="match status" value="1"/>
</dbReference>
<dbReference type="SUPFAM" id="SSF158504">
    <property type="entry name" value="BH2638-like"/>
    <property type="match status" value="1"/>
</dbReference>
<keyword id="KW-1185">Reference proteome</keyword>
<sequence>MTKGNYSYPLDPSWSTEEITTVLHFLSQVEKAYESKVDRDQLLEAYKAFKTVVPGKASEKQLDKAFQEASGFSTYQAVRAAKAKEKGFVTLGK</sequence>
<comment type="similarity">
    <text evidence="1">Belongs to the UPF0223 family.</text>
</comment>
<proteinExistence type="inferred from homology"/>
<name>Y998_STRT2</name>
<feature type="chain" id="PRO_1000064153" description="UPF0223 protein stu0998">
    <location>
        <begin position="1"/>
        <end position="93"/>
    </location>
</feature>
<reference key="1">
    <citation type="journal article" date="2004" name="Nat. Biotechnol.">
        <title>Complete sequence and comparative genome analysis of the dairy bacterium Streptococcus thermophilus.</title>
        <authorList>
            <person name="Bolotin A."/>
            <person name="Quinquis B."/>
            <person name="Renault P."/>
            <person name="Sorokin A."/>
            <person name="Ehrlich S.D."/>
            <person name="Kulakauskas S."/>
            <person name="Lapidus A."/>
            <person name="Goltsman E."/>
            <person name="Mazur M."/>
            <person name="Pusch G.D."/>
            <person name="Fonstein M."/>
            <person name="Overbeek R."/>
            <person name="Kyprides N."/>
            <person name="Purnelle B."/>
            <person name="Prozzi D."/>
            <person name="Ngui K."/>
            <person name="Masuy D."/>
            <person name="Hancy F."/>
            <person name="Burteau S."/>
            <person name="Boutry M."/>
            <person name="Delcour J."/>
            <person name="Goffeau A."/>
            <person name="Hols P."/>
        </authorList>
    </citation>
    <scope>NUCLEOTIDE SEQUENCE [LARGE SCALE GENOMIC DNA]</scope>
    <source>
        <strain>ATCC BAA-250 / LMG 18311</strain>
    </source>
</reference>
<organism>
    <name type="scientific">Streptococcus thermophilus (strain ATCC BAA-250 / LMG 18311)</name>
    <dbReference type="NCBI Taxonomy" id="264199"/>
    <lineage>
        <taxon>Bacteria</taxon>
        <taxon>Bacillati</taxon>
        <taxon>Bacillota</taxon>
        <taxon>Bacilli</taxon>
        <taxon>Lactobacillales</taxon>
        <taxon>Streptococcaceae</taxon>
        <taxon>Streptococcus</taxon>
    </lineage>
</organism>